<evidence type="ECO:0000255" key="1">
    <source>
        <dbReference type="HAMAP-Rule" id="MF_00374"/>
    </source>
</evidence>
<evidence type="ECO:0000305" key="2"/>
<reference key="1">
    <citation type="submission" date="2008-01" db="EMBL/GenBank/DDBJ databases">
        <title>Complete sequence of Thermoanaerobacter pseudethanolicus 39E.</title>
        <authorList>
            <person name="Copeland A."/>
            <person name="Lucas S."/>
            <person name="Lapidus A."/>
            <person name="Barry K."/>
            <person name="Glavina del Rio T."/>
            <person name="Dalin E."/>
            <person name="Tice H."/>
            <person name="Pitluck S."/>
            <person name="Bruce D."/>
            <person name="Goodwin L."/>
            <person name="Saunders E."/>
            <person name="Brettin T."/>
            <person name="Detter J.C."/>
            <person name="Han C."/>
            <person name="Schmutz J."/>
            <person name="Larimer F."/>
            <person name="Land M."/>
            <person name="Hauser L."/>
            <person name="Kyrpides N."/>
            <person name="Lykidis A."/>
            <person name="Hemme C."/>
            <person name="Fields M.W."/>
            <person name="He Z."/>
            <person name="Zhou J."/>
            <person name="Richardson P."/>
        </authorList>
    </citation>
    <scope>NUCLEOTIDE SEQUENCE [LARGE SCALE GENOMIC DNA]</scope>
    <source>
        <strain>ATCC 33223 / DSM 2355 / 39E</strain>
    </source>
</reference>
<organism>
    <name type="scientific">Thermoanaerobacter pseudethanolicus (strain ATCC 33223 / 39E)</name>
    <name type="common">Clostridium thermohydrosulfuricum</name>
    <dbReference type="NCBI Taxonomy" id="340099"/>
    <lineage>
        <taxon>Bacteria</taxon>
        <taxon>Bacillati</taxon>
        <taxon>Bacillota</taxon>
        <taxon>Clostridia</taxon>
        <taxon>Thermoanaerobacterales</taxon>
        <taxon>Thermoanaerobacteraceae</taxon>
        <taxon>Thermoanaerobacter</taxon>
    </lineage>
</organism>
<comment type="similarity">
    <text evidence="1">Belongs to the universal ribosomal protein uL29 family.</text>
</comment>
<keyword id="KW-1185">Reference proteome</keyword>
<keyword id="KW-0687">Ribonucleoprotein</keyword>
<keyword id="KW-0689">Ribosomal protein</keyword>
<name>RL29_THEP3</name>
<feature type="chain" id="PRO_1000121831" description="Large ribosomal subunit protein uL29">
    <location>
        <begin position="1"/>
        <end position="69"/>
    </location>
</feature>
<sequence>MKAREIRELTNEELLQKLSDLKAELFNLRFQLATGQLDNPMRIRDVRKTIARIKTILRERELGIRQNKA</sequence>
<accession>B0KCK8</accession>
<protein>
    <recommendedName>
        <fullName evidence="1">Large ribosomal subunit protein uL29</fullName>
    </recommendedName>
    <alternativeName>
        <fullName evidence="2">50S ribosomal protein L29</fullName>
    </alternativeName>
</protein>
<gene>
    <name evidence="1" type="primary">rpmC</name>
    <name type="ordered locus">Teth39_0382</name>
</gene>
<dbReference type="EMBL" id="CP000924">
    <property type="protein sequence ID" value="ABY94051.1"/>
    <property type="molecule type" value="Genomic_DNA"/>
</dbReference>
<dbReference type="RefSeq" id="WP_003868568.1">
    <property type="nucleotide sequence ID" value="NC_010321.1"/>
</dbReference>
<dbReference type="SMR" id="B0KCK8"/>
<dbReference type="STRING" id="340099.Teth39_0382"/>
<dbReference type="KEGG" id="tpd:Teth39_0382"/>
<dbReference type="eggNOG" id="COG0255">
    <property type="taxonomic scope" value="Bacteria"/>
</dbReference>
<dbReference type="HOGENOM" id="CLU_158491_5_2_9"/>
<dbReference type="Proteomes" id="UP000002156">
    <property type="component" value="Chromosome"/>
</dbReference>
<dbReference type="GO" id="GO:0022625">
    <property type="term" value="C:cytosolic large ribosomal subunit"/>
    <property type="evidence" value="ECO:0007669"/>
    <property type="project" value="TreeGrafter"/>
</dbReference>
<dbReference type="GO" id="GO:0003735">
    <property type="term" value="F:structural constituent of ribosome"/>
    <property type="evidence" value="ECO:0007669"/>
    <property type="project" value="InterPro"/>
</dbReference>
<dbReference type="GO" id="GO:0006412">
    <property type="term" value="P:translation"/>
    <property type="evidence" value="ECO:0007669"/>
    <property type="project" value="UniProtKB-UniRule"/>
</dbReference>
<dbReference type="CDD" id="cd00427">
    <property type="entry name" value="Ribosomal_L29_HIP"/>
    <property type="match status" value="1"/>
</dbReference>
<dbReference type="FunFam" id="1.10.287.310:FF:000001">
    <property type="entry name" value="50S ribosomal protein L29"/>
    <property type="match status" value="1"/>
</dbReference>
<dbReference type="Gene3D" id="1.10.287.310">
    <property type="match status" value="1"/>
</dbReference>
<dbReference type="HAMAP" id="MF_00374">
    <property type="entry name" value="Ribosomal_uL29"/>
    <property type="match status" value="1"/>
</dbReference>
<dbReference type="InterPro" id="IPR050063">
    <property type="entry name" value="Ribosomal_protein_uL29"/>
</dbReference>
<dbReference type="InterPro" id="IPR001854">
    <property type="entry name" value="Ribosomal_uL29"/>
</dbReference>
<dbReference type="InterPro" id="IPR018254">
    <property type="entry name" value="Ribosomal_uL29_CS"/>
</dbReference>
<dbReference type="InterPro" id="IPR036049">
    <property type="entry name" value="Ribosomal_uL29_sf"/>
</dbReference>
<dbReference type="NCBIfam" id="TIGR00012">
    <property type="entry name" value="L29"/>
    <property type="match status" value="1"/>
</dbReference>
<dbReference type="PANTHER" id="PTHR10916">
    <property type="entry name" value="60S RIBOSOMAL PROTEIN L35/50S RIBOSOMAL PROTEIN L29"/>
    <property type="match status" value="1"/>
</dbReference>
<dbReference type="PANTHER" id="PTHR10916:SF0">
    <property type="entry name" value="LARGE RIBOSOMAL SUBUNIT PROTEIN UL29C"/>
    <property type="match status" value="1"/>
</dbReference>
<dbReference type="Pfam" id="PF00831">
    <property type="entry name" value="Ribosomal_L29"/>
    <property type="match status" value="1"/>
</dbReference>
<dbReference type="SUPFAM" id="SSF46561">
    <property type="entry name" value="Ribosomal protein L29 (L29p)"/>
    <property type="match status" value="1"/>
</dbReference>
<dbReference type="PROSITE" id="PS00579">
    <property type="entry name" value="RIBOSOMAL_L29"/>
    <property type="match status" value="1"/>
</dbReference>
<proteinExistence type="inferred from homology"/>